<protein>
    <recommendedName>
        <fullName>Dolichyl-phosphooligosaccharide-protein glycotransferase 2</fullName>
        <ecNumber>2.4.99.21</ecNumber>
    </recommendedName>
    <alternativeName>
        <fullName>Archaeal glycosylation protein B</fullName>
        <shortName>AglB-S2</shortName>
        <shortName>AglB-Short 2</shortName>
    </alternativeName>
    <alternativeName>
        <fullName>Oligosaccharyl transferase</fullName>
        <shortName>OST</shortName>
        <shortName>OTase</shortName>
    </alternativeName>
</protein>
<gene>
    <name type="primary">aglB2</name>
    <name type="ordered locus">AF_0040</name>
</gene>
<evidence type="ECO:0000250" key="1">
    <source>
        <dbReference type="UniProtKB" id="B9KDD4"/>
    </source>
</evidence>
<evidence type="ECO:0000250" key="2">
    <source>
        <dbReference type="UniProtKB" id="O29867"/>
    </source>
</evidence>
<evidence type="ECO:0000250" key="3">
    <source>
        <dbReference type="UniProtKB" id="Q2EMT4"/>
    </source>
</evidence>
<evidence type="ECO:0000255" key="4"/>
<evidence type="ECO:0000269" key="5">
    <source>
    </source>
</evidence>
<evidence type="ECO:0000305" key="6"/>
<evidence type="ECO:0000305" key="7">
    <source>
    </source>
</evidence>
<evidence type="ECO:0000305" key="8">
    <source>
    </source>
</evidence>
<evidence type="ECO:0007744" key="9">
    <source>
        <dbReference type="PDB" id="3VU0"/>
    </source>
</evidence>
<evidence type="ECO:0007829" key="10">
    <source>
        <dbReference type="PDB" id="3VU0"/>
    </source>
</evidence>
<accession>O30195</accession>
<sequence>MTPVGMDRKSLSLLILIVLLGLCIRLQNFGEIFDSRIYYYGYDPYYHMRLVEAIVLEGYRPSFDYYINYPYGLRIDWLPLFDYILAFPGLFLGFWASEIFAVVFPVIIGVLCIVLVYLISLEVLRNEKFALISAFIFSVCPVTVWKSLLGKADHHIWVVFLLLLSIWLVTKPGLLKLLSGIPMLLMALSWLGAPIYAALLAVSSLFQFNEKEVRIVGISNLIPVLSSIQNLFLGFSFLAIAVFLLVGSFVKRFERRFRYAIVYYLCICSVALLSAYLMPVGWLGFVKSGISYVLGTDIYLPTIREARSFQILGVISSAGYLFFVLAIPALFMLRNGFLKVFFVLSFLISILQLRFVEVLAFPVAILASYTICQILERVDYPVFRKEEEGESKRRGRKEKKKAVEIRKKDHATVIAFLLFLALPCFANSLAPVEMTMDWKEALNWMKENLEAQDYLKAYEKPDYAVLSWWDYGNWILYVAKKAVVCNNFQAGADDAAKFFTAQSEEEAMKIVEKRKVRYVVTVEELTVKPETNKTKFIPIMQIAGYSPEYMKNKEIIDFFNKTMLYKLHVENATNLTHFRLLKNFGTVKIFEVK</sequence>
<keyword id="KW-0002">3D-structure</keyword>
<keyword id="KW-1003">Cell membrane</keyword>
<keyword id="KW-0328">Glycosyltransferase</keyword>
<keyword id="KW-0460">Magnesium</keyword>
<keyword id="KW-0464">Manganese</keyword>
<keyword id="KW-0472">Membrane</keyword>
<keyword id="KW-0479">Metal-binding</keyword>
<keyword id="KW-1185">Reference proteome</keyword>
<keyword id="KW-0808">Transferase</keyword>
<keyword id="KW-0812">Transmembrane</keyword>
<keyword id="KW-1133">Transmembrane helix</keyword>
<organism>
    <name type="scientific">Archaeoglobus fulgidus (strain ATCC 49558 / DSM 4304 / JCM 9628 / NBRC 100126 / VC-16)</name>
    <dbReference type="NCBI Taxonomy" id="224325"/>
    <lineage>
        <taxon>Archaea</taxon>
        <taxon>Methanobacteriati</taxon>
        <taxon>Methanobacteriota</taxon>
        <taxon>Archaeoglobi</taxon>
        <taxon>Archaeoglobales</taxon>
        <taxon>Archaeoglobaceae</taxon>
        <taxon>Archaeoglobus</taxon>
    </lineage>
</organism>
<name>AGLB2_ARCFU</name>
<reference key="1">
    <citation type="journal article" date="1997" name="Nature">
        <title>The complete genome sequence of the hyperthermophilic, sulphate-reducing archaeon Archaeoglobus fulgidus.</title>
        <authorList>
            <person name="Klenk H.-P."/>
            <person name="Clayton R.A."/>
            <person name="Tomb J.-F."/>
            <person name="White O."/>
            <person name="Nelson K.E."/>
            <person name="Ketchum K.A."/>
            <person name="Dodson R.J."/>
            <person name="Gwinn M.L."/>
            <person name="Hickey E.K."/>
            <person name="Peterson J.D."/>
            <person name="Richardson D.L."/>
            <person name="Kerlavage A.R."/>
            <person name="Graham D.E."/>
            <person name="Kyrpides N.C."/>
            <person name="Fleischmann R.D."/>
            <person name="Quackenbush J."/>
            <person name="Lee N.H."/>
            <person name="Sutton G.G."/>
            <person name="Gill S.R."/>
            <person name="Kirkness E.F."/>
            <person name="Dougherty B.A."/>
            <person name="McKenney K."/>
            <person name="Adams M.D."/>
            <person name="Loftus B.J."/>
            <person name="Peterson S.N."/>
            <person name="Reich C.I."/>
            <person name="McNeil L.K."/>
            <person name="Badger J.H."/>
            <person name="Glodek A."/>
            <person name="Zhou L."/>
            <person name="Overbeek R."/>
            <person name="Gocayne J.D."/>
            <person name="Weidman J.F."/>
            <person name="McDonald L.A."/>
            <person name="Utterback T.R."/>
            <person name="Cotton M.D."/>
            <person name="Spriggs T."/>
            <person name="Artiach P."/>
            <person name="Kaine B.P."/>
            <person name="Sykes S.M."/>
            <person name="Sadow P.W."/>
            <person name="D'Andrea K.P."/>
            <person name="Bowman C."/>
            <person name="Fujii C."/>
            <person name="Garland S.A."/>
            <person name="Mason T.M."/>
            <person name="Olsen G.J."/>
            <person name="Fraser C.M."/>
            <person name="Smith H.O."/>
            <person name="Woese C.R."/>
            <person name="Venter J.C."/>
        </authorList>
    </citation>
    <scope>NUCLEOTIDE SEQUENCE [LARGE SCALE GENOMIC DNA]</scope>
    <source>
        <strain>ATCC 49558 / DSM 4304 / JCM 9628 / NBRC 100126 / VC-16</strain>
    </source>
</reference>
<reference key="2">
    <citation type="journal article" date="2016" name="J. Biol. Chem.">
        <title>Comparative analysis of archaeal lipid-linked oligosaccharides that serve as oligosaccharide donors for Asn glycosylation.</title>
        <authorList>
            <person name="Taguchi Y."/>
            <person name="Fujinami D."/>
            <person name="Kohda D."/>
        </authorList>
    </citation>
    <scope>COMPOSITION OF LIPID-LINKED OLIGOSACCHARIDE</scope>
</reference>
<reference evidence="9" key="3">
    <citation type="journal article" date="2013" name="Structure">
        <title>Crystallographic and NMR evidence for flexibility in oligosaccharyltransferases and its catalytic significance.</title>
        <authorList>
            <person name="Nyirenda J."/>
            <person name="Matsumoto S."/>
            <person name="Saitoh T."/>
            <person name="Maita N."/>
            <person name="Noda N.N."/>
            <person name="Inagaki F."/>
            <person name="Kohda D."/>
        </authorList>
    </citation>
    <scope>X-RAY CRYSTALLOGRAPHY (1.94 ANGSTROMS) OF 433-593</scope>
</reference>
<feature type="chain" id="PRO_0000445595" description="Dolichyl-phosphooligosaccharide-protein glycotransferase 2">
    <location>
        <begin position="1"/>
        <end position="593"/>
    </location>
</feature>
<feature type="topological domain" description="Cytoplasmic" evidence="6">
    <location>
        <begin position="1"/>
        <end position="12"/>
    </location>
</feature>
<feature type="transmembrane region" description="Helical" evidence="4">
    <location>
        <begin position="13"/>
        <end position="33"/>
    </location>
</feature>
<feature type="topological domain" description="Extracellular" evidence="6">
    <location>
        <begin position="34"/>
        <end position="98"/>
    </location>
</feature>
<feature type="transmembrane region" description="Helical" evidence="4">
    <location>
        <begin position="99"/>
        <end position="119"/>
    </location>
</feature>
<feature type="topological domain" description="Cytoplasmic" evidence="6">
    <location>
        <begin position="120"/>
        <end position="128"/>
    </location>
</feature>
<feature type="transmembrane region" description="Helical" evidence="4">
    <location>
        <begin position="129"/>
        <end position="149"/>
    </location>
</feature>
<feature type="topological domain" description="Extracellular" evidence="6">
    <location>
        <begin position="150"/>
        <end position="154"/>
    </location>
</feature>
<feature type="transmembrane region" description="Helical" evidence="4">
    <location>
        <begin position="155"/>
        <end position="175"/>
    </location>
</feature>
<feature type="topological domain" description="Cytoplasmic" evidence="6">
    <location>
        <begin position="176"/>
        <end position="180"/>
    </location>
</feature>
<feature type="transmembrane region" description="Helical" evidence="4">
    <location>
        <begin position="181"/>
        <end position="201"/>
    </location>
</feature>
<feature type="topological domain" description="Extracellular" evidence="6">
    <location>
        <begin position="202"/>
        <end position="229"/>
    </location>
</feature>
<feature type="transmembrane region" description="Helical" evidence="4">
    <location>
        <begin position="230"/>
        <end position="250"/>
    </location>
</feature>
<feature type="topological domain" description="Cytoplasmic" evidence="6">
    <location>
        <begin position="251"/>
        <end position="265"/>
    </location>
</feature>
<feature type="transmembrane region" description="Helical" evidence="4">
    <location>
        <begin position="266"/>
        <end position="286"/>
    </location>
</feature>
<feature type="topological domain" description="Extracellular" evidence="6">
    <location>
        <begin position="287"/>
        <end position="310"/>
    </location>
</feature>
<feature type="transmembrane region" description="Helical" evidence="4">
    <location>
        <begin position="311"/>
        <end position="331"/>
    </location>
</feature>
<feature type="topological domain" description="Cytoplasmic" evidence="6">
    <location>
        <position position="332"/>
    </location>
</feature>
<feature type="transmembrane region" description="Helical" evidence="4">
    <location>
        <begin position="333"/>
        <end position="353"/>
    </location>
</feature>
<feature type="topological domain" description="Extracellular" evidence="6">
    <location>
        <position position="354"/>
    </location>
</feature>
<feature type="transmembrane region" description="Helical" evidence="4">
    <location>
        <begin position="355"/>
        <end position="375"/>
    </location>
</feature>
<feature type="topological domain" description="Cytoplasmic" evidence="6">
    <location>
        <begin position="376"/>
        <end position="411"/>
    </location>
</feature>
<feature type="transmembrane region" description="Helical" evidence="4">
    <location>
        <begin position="412"/>
        <end position="432"/>
    </location>
</feature>
<feature type="topological domain" description="Extracellular" evidence="6">
    <location>
        <begin position="433"/>
        <end position="593"/>
    </location>
</feature>
<feature type="region of interest" description="Interacts with target acceptor peptide in protein substrate" evidence="2">
    <location>
        <begin position="468"/>
        <end position="470"/>
    </location>
</feature>
<feature type="short sequence motif" description="DXD motif 1" evidence="2">
    <location>
        <begin position="41"/>
        <end position="43"/>
    </location>
</feature>
<feature type="short sequence motif" description="DXD motif 2" evidence="2">
    <location>
        <begin position="153"/>
        <end position="155"/>
    </location>
</feature>
<feature type="short sequence motif" description="TIXE motif" evidence="2">
    <location>
        <begin position="302"/>
        <end position="305"/>
    </location>
</feature>
<feature type="short sequence motif" description="WWDYG motif" evidence="7">
    <location>
        <begin position="468"/>
        <end position="472"/>
    </location>
</feature>
<feature type="short sequence motif" description="DKi motif" evidence="7">
    <location>
        <begin position="524"/>
        <end position="539"/>
    </location>
</feature>
<feature type="binding site" evidence="2">
    <location>
        <position position="43"/>
    </location>
    <ligand>
        <name>Mn(2+)</name>
        <dbReference type="ChEBI" id="CHEBI:29035"/>
    </ligand>
</feature>
<feature type="binding site" evidence="2">
    <location>
        <position position="153"/>
    </location>
    <ligand>
        <name>Mn(2+)</name>
        <dbReference type="ChEBI" id="CHEBI:29035"/>
    </ligand>
</feature>
<feature type="binding site" evidence="2">
    <location>
        <position position="154"/>
    </location>
    <ligand>
        <name>a glycophospholipid</name>
        <dbReference type="ChEBI" id="CHEBI:24397"/>
        <note>archaeal dolichyl phosphooligosaccharide</note>
    </ligand>
</feature>
<feature type="binding site" evidence="2">
    <location>
        <position position="155"/>
    </location>
    <ligand>
        <name>Mn(2+)</name>
        <dbReference type="ChEBI" id="CHEBI:29035"/>
    </ligand>
</feature>
<feature type="binding site" evidence="2">
    <location>
        <position position="354"/>
    </location>
    <ligand>
        <name>a glycophospholipid</name>
        <dbReference type="ChEBI" id="CHEBI:24397"/>
        <note>archaeal dolichyl phosphooligosaccharide</note>
    </ligand>
</feature>
<feature type="site" description="Interacts with target acceptor peptide in protein substrate" evidence="1">
    <location>
        <position position="43"/>
    </location>
</feature>
<feature type="site" description="Important for catalytic activity" evidence="1">
    <location>
        <position position="146"/>
    </location>
</feature>
<feature type="site" description="Interacts with target acceptor peptide in protein substrate" evidence="2">
    <location>
        <position position="305"/>
    </location>
</feature>
<feature type="site" description="Interacts with target acceptor peptide in protein substrate" evidence="2">
    <location>
        <position position="535"/>
    </location>
</feature>
<feature type="helix" evidence="10">
    <location>
        <begin position="436"/>
        <end position="448"/>
    </location>
</feature>
<feature type="turn" evidence="10">
    <location>
        <begin position="456"/>
        <end position="458"/>
    </location>
</feature>
<feature type="strand" evidence="10">
    <location>
        <begin position="464"/>
        <end position="466"/>
    </location>
</feature>
<feature type="helix" evidence="10">
    <location>
        <begin position="469"/>
        <end position="471"/>
    </location>
</feature>
<feature type="helix" evidence="10">
    <location>
        <begin position="472"/>
        <end position="477"/>
    </location>
</feature>
<feature type="strand" evidence="10">
    <location>
        <begin position="486"/>
        <end position="491"/>
    </location>
</feature>
<feature type="helix" evidence="10">
    <location>
        <begin position="492"/>
        <end position="500"/>
    </location>
</feature>
<feature type="helix" evidence="10">
    <location>
        <begin position="504"/>
        <end position="514"/>
    </location>
</feature>
<feature type="strand" evidence="10">
    <location>
        <begin position="516"/>
        <end position="522"/>
    </location>
</feature>
<feature type="helix" evidence="10">
    <location>
        <begin position="523"/>
        <end position="525"/>
    </location>
</feature>
<feature type="helix" evidence="10">
    <location>
        <begin position="536"/>
        <end position="543"/>
    </location>
</feature>
<feature type="helix" evidence="10">
    <location>
        <begin position="547"/>
        <end position="549"/>
    </location>
</feature>
<feature type="helix" evidence="10">
    <location>
        <begin position="552"/>
        <end position="559"/>
    </location>
</feature>
<feature type="helix" evidence="10">
    <location>
        <begin position="563"/>
        <end position="568"/>
    </location>
</feature>
<feature type="turn" evidence="10">
    <location>
        <begin position="569"/>
        <end position="574"/>
    </location>
</feature>
<feature type="strand" evidence="10">
    <location>
        <begin position="576"/>
        <end position="584"/>
    </location>
</feature>
<feature type="strand" evidence="10">
    <location>
        <begin position="587"/>
        <end position="592"/>
    </location>
</feature>
<comment type="function">
    <text evidence="5">Oligosaccharyl transferase (OST) that catalyzes the initial transfer of a defined glycan (a GalNAc-linked heptasaccharide composed of 4 Hex, 3 dHex and a sulfate for A.fulgidus AglB-S) from the lipid carrier dolichol-monophosphate to an asparagine residue within an Asn-X-Ser/Thr consensus motif in nascent polypeptide chains, the first step in protein N-glycosylation.</text>
</comment>
<comment type="catalytic activity">
    <reaction evidence="3">
        <text>an archaeal dolichyl phosphooligosaccharide + [protein]-L-asparagine = an archaeal dolichyl phosphate + a glycoprotein with the oligosaccharide chain attached by N-beta-D-glycosyl linkage to a protein L-asparagine.</text>
        <dbReference type="EC" id="2.4.99.21"/>
    </reaction>
</comment>
<comment type="cofactor">
    <cofactor evidence="2">
        <name>Mn(2+)</name>
        <dbReference type="ChEBI" id="CHEBI:29035"/>
    </cofactor>
    <cofactor evidence="2">
        <name>Mg(2+)</name>
        <dbReference type="ChEBI" id="CHEBI:18420"/>
    </cofactor>
    <cofactor evidence="2">
        <name>Zn(2+)</name>
        <dbReference type="ChEBI" id="CHEBI:29105"/>
    </cofactor>
</comment>
<comment type="pathway">
    <text evidence="8">Protein modification; protein glycosylation.</text>
</comment>
<comment type="subcellular location">
    <subcellularLocation>
        <location evidence="3">Cell membrane</location>
        <topology evidence="3">Multi-pass membrane protein</topology>
    </subcellularLocation>
</comment>
<comment type="similarity">
    <text evidence="6">Belongs to the STT3 family.</text>
</comment>
<dbReference type="EC" id="2.4.99.21"/>
<dbReference type="EMBL" id="AE000782">
    <property type="protein sequence ID" value="AAB91198.1"/>
    <property type="molecule type" value="Genomic_DNA"/>
</dbReference>
<dbReference type="PIR" id="H69254">
    <property type="entry name" value="H69254"/>
</dbReference>
<dbReference type="PDB" id="3VU0">
    <property type="method" value="X-ray"/>
    <property type="resolution" value="1.94 A"/>
    <property type="chains" value="A/B/C=433-593"/>
</dbReference>
<dbReference type="PDBsum" id="3VU0"/>
<dbReference type="SMR" id="O30195"/>
<dbReference type="STRING" id="224325.AF_0040"/>
<dbReference type="CAZy" id="GT66">
    <property type="family name" value="Glycosyltransferase Family 66"/>
</dbReference>
<dbReference type="PaxDb" id="224325-AF_0040"/>
<dbReference type="EnsemblBacteria" id="AAB91198">
    <property type="protein sequence ID" value="AAB91198"/>
    <property type="gene ID" value="AF_0040"/>
</dbReference>
<dbReference type="KEGG" id="afu:AF_0040"/>
<dbReference type="eggNOG" id="arCOG02043">
    <property type="taxonomic scope" value="Archaea"/>
</dbReference>
<dbReference type="HOGENOM" id="CLU_008803_0_0_2"/>
<dbReference type="PhylomeDB" id="O30195"/>
<dbReference type="BRENDA" id="2.4.99.18">
    <property type="organism ID" value="414"/>
</dbReference>
<dbReference type="UniPathway" id="UPA00378"/>
<dbReference type="EvolutionaryTrace" id="O30195"/>
<dbReference type="Proteomes" id="UP000002199">
    <property type="component" value="Chromosome"/>
</dbReference>
<dbReference type="GO" id="GO:0005886">
    <property type="term" value="C:plasma membrane"/>
    <property type="evidence" value="ECO:0007669"/>
    <property type="project" value="UniProtKB-SubCell"/>
</dbReference>
<dbReference type="GO" id="GO:0046872">
    <property type="term" value="F:metal ion binding"/>
    <property type="evidence" value="ECO:0007669"/>
    <property type="project" value="UniProtKB-KW"/>
</dbReference>
<dbReference type="GO" id="GO:0004576">
    <property type="term" value="F:oligosaccharyl transferase activity"/>
    <property type="evidence" value="ECO:0007669"/>
    <property type="project" value="InterPro"/>
</dbReference>
<dbReference type="GO" id="GO:0006486">
    <property type="term" value="P:protein glycosylation"/>
    <property type="evidence" value="ECO:0007669"/>
    <property type="project" value="UniProtKB-UniPathway"/>
</dbReference>
<dbReference type="Gene3D" id="3.40.50.12610">
    <property type="match status" value="1"/>
</dbReference>
<dbReference type="InterPro" id="IPR054479">
    <property type="entry name" value="AglB-like_core"/>
</dbReference>
<dbReference type="InterPro" id="IPR003674">
    <property type="entry name" value="Oligo_trans_STT3"/>
</dbReference>
<dbReference type="InterPro" id="IPR048307">
    <property type="entry name" value="STT3_N"/>
</dbReference>
<dbReference type="PANTHER" id="PTHR13872">
    <property type="entry name" value="DOLICHYL-DIPHOSPHOOLIGOSACCHARIDE--PROTEIN GLYCOSYLTRANSFERASE SUBUNIT"/>
    <property type="match status" value="1"/>
</dbReference>
<dbReference type="PANTHER" id="PTHR13872:SF1">
    <property type="entry name" value="DOLICHYL-DIPHOSPHOOLIGOSACCHARIDE--PROTEIN GLYCOSYLTRANSFERASE SUBUNIT STT3B"/>
    <property type="match status" value="1"/>
</dbReference>
<dbReference type="Pfam" id="PF22627">
    <property type="entry name" value="AglB_core-like"/>
    <property type="match status" value="1"/>
</dbReference>
<dbReference type="Pfam" id="PF02516">
    <property type="entry name" value="STT3"/>
    <property type="match status" value="1"/>
</dbReference>
<proteinExistence type="evidence at protein level"/>